<keyword id="KW-0325">Glycoprotein</keyword>
<keyword id="KW-0349">Heme</keyword>
<keyword id="KW-0408">Iron</keyword>
<keyword id="KW-0472">Membrane</keyword>
<keyword id="KW-0479">Metal-binding</keyword>
<keyword id="KW-0503">Monooxygenase</keyword>
<keyword id="KW-0560">Oxidoreductase</keyword>
<keyword id="KW-0812">Transmembrane</keyword>
<keyword id="KW-1133">Transmembrane helix</keyword>
<protein>
    <recommendedName>
        <fullName evidence="8">Cytochrome P450 monooxygenase vrtE</fullName>
        <ecNumber evidence="10">1.-.-.-</ecNumber>
    </recommendedName>
    <alternativeName>
        <fullName evidence="8">Viridicatumtoxin synthesis protein E</fullName>
    </alternativeName>
</protein>
<proteinExistence type="evidence at protein level"/>
<reference key="1">
    <citation type="journal article" date="2010" name="Chem. Biol.">
        <title>Identification of the viridicatumtoxin and griseofulvin gene clusters from Penicillium aethiopicum.</title>
        <authorList>
            <person name="Chooi Y.H."/>
            <person name="Cacho R."/>
            <person name="Tang Y."/>
        </authorList>
    </citation>
    <scope>NUCLEOTIDE SEQUENCE [GENOMIC DNA]</scope>
    <scope>FUNCTION</scope>
    <source>
        <strain>IBT 5753</strain>
    </source>
</reference>
<reference key="2">
    <citation type="journal article" date="2008" name="J. Antibiot.">
        <title>Viridicatumtoxin B, a new anti-MRSA agent from Penicillium sp. FR11.</title>
        <authorList>
            <person name="Zheng C.J."/>
            <person name="Yu H.E."/>
            <person name="Kim E.H."/>
            <person name="Kim W.G."/>
        </authorList>
    </citation>
    <scope>BIOTECHNOLOGY</scope>
</reference>
<reference key="3">
    <citation type="journal article" date="2013" name="J. Am. Chem. Soc.">
        <title>A cytochrome P450 serves as an unexpected terpene cyclase during fungal meroterpenoid biosynthesis.</title>
        <authorList>
            <person name="Chooi Y.H."/>
            <person name="Hong Y.J."/>
            <person name="Cacho R.A."/>
            <person name="Tantillo D.J."/>
            <person name="Tang Y."/>
        </authorList>
    </citation>
    <scope>FUNCTION</scope>
    <scope>DISRUPTION PHENOTYPE</scope>
</reference>
<reference key="4">
    <citation type="journal article" date="2016" name="J. Antibiot.">
        <title>Inhibition of bacterial undecaprenyl pyrophosphate synthase by small fungal molecules.</title>
        <authorList>
            <person name="Inokoshi J."/>
            <person name="Nakamura Y."/>
            <person name="Komada S."/>
            <person name="Komatsu K."/>
            <person name="Umeyama H."/>
            <person name="Tomoda H."/>
        </authorList>
    </citation>
    <scope>BIOTECHNOLOGY</scope>
</reference>
<feature type="chain" id="PRO_0000436825" description="Cytochrome P450 monooxygenase vrtE">
    <location>
        <begin position="1"/>
        <end position="520"/>
    </location>
</feature>
<feature type="transmembrane region" description="Helical" evidence="2">
    <location>
        <begin position="16"/>
        <end position="36"/>
    </location>
</feature>
<feature type="binding site" description="axial binding residue" evidence="1">
    <location>
        <position position="459"/>
    </location>
    <ligand>
        <name>heme</name>
        <dbReference type="ChEBI" id="CHEBI:30413"/>
    </ligand>
    <ligandPart>
        <name>Fe</name>
        <dbReference type="ChEBI" id="CHEBI:18248"/>
    </ligandPart>
</feature>
<feature type="glycosylation site" description="N-linked (GlcNAc...) asparagine" evidence="3">
    <location>
        <position position="137"/>
    </location>
</feature>
<dbReference type="EC" id="1.-.-.-" evidence="10"/>
<dbReference type="EMBL" id="GU574477">
    <property type="protein sequence ID" value="ADI24930.1"/>
    <property type="molecule type" value="Genomic_DNA"/>
</dbReference>
<dbReference type="SMR" id="D7PHZ6"/>
<dbReference type="GlyCosmos" id="D7PHZ6">
    <property type="glycosylation" value="1 site, No reported glycans"/>
</dbReference>
<dbReference type="BioCyc" id="MetaCyc:MONOMER-19280"/>
<dbReference type="UniPathway" id="UPA00213"/>
<dbReference type="GO" id="GO:0016020">
    <property type="term" value="C:membrane"/>
    <property type="evidence" value="ECO:0007669"/>
    <property type="project" value="UniProtKB-SubCell"/>
</dbReference>
<dbReference type="GO" id="GO:0020037">
    <property type="term" value="F:heme binding"/>
    <property type="evidence" value="ECO:0007669"/>
    <property type="project" value="InterPro"/>
</dbReference>
<dbReference type="GO" id="GO:0005506">
    <property type="term" value="F:iron ion binding"/>
    <property type="evidence" value="ECO:0007669"/>
    <property type="project" value="InterPro"/>
</dbReference>
<dbReference type="GO" id="GO:0004497">
    <property type="term" value="F:monooxygenase activity"/>
    <property type="evidence" value="ECO:0007669"/>
    <property type="project" value="UniProtKB-KW"/>
</dbReference>
<dbReference type="GO" id="GO:0016705">
    <property type="term" value="F:oxidoreductase activity, acting on paired donors, with incorporation or reduction of molecular oxygen"/>
    <property type="evidence" value="ECO:0007669"/>
    <property type="project" value="InterPro"/>
</dbReference>
<dbReference type="GO" id="GO:0016114">
    <property type="term" value="P:terpenoid biosynthetic process"/>
    <property type="evidence" value="ECO:0007669"/>
    <property type="project" value="UniProtKB-UniPathway"/>
</dbReference>
<dbReference type="GO" id="GO:0140872">
    <property type="term" value="P:viridicatumtoxin biosynthetic process"/>
    <property type="evidence" value="ECO:0000315"/>
    <property type="project" value="GO_Central"/>
</dbReference>
<dbReference type="CDD" id="cd11060">
    <property type="entry name" value="CYP57A1-like"/>
    <property type="match status" value="1"/>
</dbReference>
<dbReference type="Gene3D" id="1.10.630.10">
    <property type="entry name" value="Cytochrome P450"/>
    <property type="match status" value="1"/>
</dbReference>
<dbReference type="InterPro" id="IPR001128">
    <property type="entry name" value="Cyt_P450"/>
</dbReference>
<dbReference type="InterPro" id="IPR017972">
    <property type="entry name" value="Cyt_P450_CS"/>
</dbReference>
<dbReference type="InterPro" id="IPR002401">
    <property type="entry name" value="Cyt_P450_E_grp-I"/>
</dbReference>
<dbReference type="InterPro" id="IPR036396">
    <property type="entry name" value="Cyt_P450_sf"/>
</dbReference>
<dbReference type="InterPro" id="IPR050121">
    <property type="entry name" value="Cytochrome_P450_monoxygenase"/>
</dbReference>
<dbReference type="PANTHER" id="PTHR24305">
    <property type="entry name" value="CYTOCHROME P450"/>
    <property type="match status" value="1"/>
</dbReference>
<dbReference type="PANTHER" id="PTHR24305:SF232">
    <property type="entry name" value="P450, PUTATIVE (EUROFUNG)-RELATED"/>
    <property type="match status" value="1"/>
</dbReference>
<dbReference type="Pfam" id="PF00067">
    <property type="entry name" value="p450"/>
    <property type="match status" value="1"/>
</dbReference>
<dbReference type="PRINTS" id="PR00463">
    <property type="entry name" value="EP450I"/>
</dbReference>
<dbReference type="PRINTS" id="PR00385">
    <property type="entry name" value="P450"/>
</dbReference>
<dbReference type="SUPFAM" id="SSF48264">
    <property type="entry name" value="Cytochrome P450"/>
    <property type="match status" value="1"/>
</dbReference>
<dbReference type="PROSITE" id="PS00086">
    <property type="entry name" value="CYTOCHROME_P450"/>
    <property type="match status" value="1"/>
</dbReference>
<accession>D7PHZ6</accession>
<evidence type="ECO:0000250" key="1">
    <source>
        <dbReference type="UniProtKB" id="P04798"/>
    </source>
</evidence>
<evidence type="ECO:0000255" key="2"/>
<evidence type="ECO:0000255" key="3">
    <source>
        <dbReference type="PROSITE-ProRule" id="PRU00498"/>
    </source>
</evidence>
<evidence type="ECO:0000269" key="4">
    <source>
    </source>
</evidence>
<evidence type="ECO:0000269" key="5">
    <source>
    </source>
</evidence>
<evidence type="ECO:0000269" key="6">
    <source>
    </source>
</evidence>
<evidence type="ECO:0000269" key="7">
    <source>
    </source>
</evidence>
<evidence type="ECO:0000303" key="8">
    <source>
    </source>
</evidence>
<evidence type="ECO:0000305" key="9"/>
<evidence type="ECO:0000305" key="10">
    <source>
    </source>
</evidence>
<organism>
    <name type="scientific">Penicillium aethiopicum</name>
    <dbReference type="NCBI Taxonomy" id="36650"/>
    <lineage>
        <taxon>Eukaryota</taxon>
        <taxon>Fungi</taxon>
        <taxon>Dikarya</taxon>
        <taxon>Ascomycota</taxon>
        <taxon>Pezizomycotina</taxon>
        <taxon>Eurotiomycetes</taxon>
        <taxon>Eurotiomycetidae</taxon>
        <taxon>Eurotiales</taxon>
        <taxon>Aspergillaceae</taxon>
        <taxon>Penicillium</taxon>
    </lineage>
</organism>
<sequence>MFIAAVTHNWMERLAALSLLHYVLGAIFLLLLFHMLSNFFHPGLVDVPGPFAAKFTDLWRLFKVWQRRFKEDLPGLHASHRSTLIRIGPRMVSCSDPRAVELIYGFHTEFSKSDMVKAMAPIYKGKKQPTMFAAADNKTHARIRKPVAGAYAMTSIMQRMDELFIRPKRACDIHNWVQYFAFDMVLEMTMSRNLGFMKAGGDVDGVLKQLQKDLDYRGIALAMPIIDRIWRLNPVSKFFKPKQSGHFAMRCKRILEDRMAYEKSLDSRTQQQQDQKPHDFAHRFLEAQRKDPSISDGQLIGYMQANLIAGSDTTAVVMRTAIYYTLKQPWILQRLVTELDQYHGPLPVPFRIARFEMPFCGAIVREALRRHFAFIGMMERQTPPCGVVMPDGRRLPGGVVIGMHGDLIGRDRAIFGEDADEFNPLRWLARPGEPEAKYQERLRAMNAHDLAFGHGPRGCIGKHVAEMEIYKFIPTFFALIQPRFMRPEQSWTVRQLFVFKQSGMDMMLDWRQGKGLQSMA</sequence>
<name>VRTE_PENAE</name>
<gene>
    <name evidence="8" type="primary">vrtE</name>
</gene>
<comment type="function">
    <text evidence="5 6">Cytochrome P450 monooxygenase; part of the gene cluster that mediates the biosynthesis of viridicatumtoxin, a tetracycline-like fungal meroterpenoid with a unique, fused spirobicyclic ring system (PubMed:20534346). The first step of the pathway is the production of the malonamoyl-CoA starter unit for the polyketide synthase vrtA (PubMed:20534346). The aldolase vrtJ may be involved in the synthesis of the malonamate substrate for malonamoyl-CoA synthetase vrtB (PubMed:20534346). The polyketide synthase vrtA then may utilize the malonamoyl-CoA starter unit, followed by sequential condensation of eight malonyl-CoA units to form the polyketide backbone (PubMed:20534346). The cyclization of the last ring could be mediated by the lactamase-like protein vrtG (PubMed:20534346). The proposed post-PKS tailoring steps are a hydroxylation at C5 catalyzed the cytochrome P450 monooxygenase vrtE, a hydroxylation at C12a catalyzed by VrtH and/or VrtI, and an O-methylation by the O-methyltransferase vrtF (PubMed:20534346, PubMed:24161266). VrtC is then proposed to catalyze the transfer of a geranyl group synthesized by vrtD to the aromatic C ring of the tetracyclic polyketide intermediate of viridicatumtoxin to yield previridicatumtoxin (PubMed:20534346). Finally, the cytochrome P450 monooxygenase vrtK catalyzes the spirocyclization of the geranyl moiety of previridicatumtoxin to afford viridicatumtoxin (PubMed:24161266).</text>
</comment>
<comment type="cofactor">
    <cofactor evidence="1">
        <name>heme</name>
        <dbReference type="ChEBI" id="CHEBI:30413"/>
    </cofactor>
</comment>
<comment type="pathway">
    <text evidence="5">Secondary metabolite biosynthesis; terpenoid biosynthesis.</text>
</comment>
<comment type="subcellular location">
    <subcellularLocation>
        <location evidence="2">Membrane</location>
        <topology evidence="2">Single-pass membrane protein</topology>
    </subcellularLocation>
</comment>
<comment type="disruption phenotype">
    <text evidence="6">Impairs the production of viridicatumtoxin, but accumulates a new naphthacenedione intermediate, the 8-O-desmethyl derivative of anthrotainin (PubMed:24161266).</text>
</comment>
<comment type="biotechnology">
    <text evidence="4 7">Viridicatumtoxin and its derivative, viridicatumtoxin B, exhibit anti-methicillin-resistant Staphylococcus aureus (anti-MRSA) activity (PubMed:19168978). Moreover, viridicatumtoxin and a C2 acetyl analog, spirohexaline, have been demonstrated to inhibit bacterial undecaprenyl diphosphate synthase, a potential new target for antibiotic development (PubMed:27049441).</text>
</comment>
<comment type="similarity">
    <text evidence="9">Belongs to the cytochrome P450 family.</text>
</comment>